<reference key="1">
    <citation type="submission" date="2007-07" db="EMBL/GenBank/DDBJ databases">
        <title>Complete sequence of chromosome of Shewanella baltica OS185.</title>
        <authorList>
            <consortium name="US DOE Joint Genome Institute"/>
            <person name="Copeland A."/>
            <person name="Lucas S."/>
            <person name="Lapidus A."/>
            <person name="Barry K."/>
            <person name="Glavina del Rio T."/>
            <person name="Dalin E."/>
            <person name="Tice H."/>
            <person name="Pitluck S."/>
            <person name="Sims D."/>
            <person name="Brettin T."/>
            <person name="Bruce D."/>
            <person name="Detter J.C."/>
            <person name="Han C."/>
            <person name="Schmutz J."/>
            <person name="Larimer F."/>
            <person name="Land M."/>
            <person name="Hauser L."/>
            <person name="Kyrpides N."/>
            <person name="Mikhailova N."/>
            <person name="Brettar I."/>
            <person name="Rodrigues J."/>
            <person name="Konstantinidis K."/>
            <person name="Tiedje J."/>
            <person name="Richardson P."/>
        </authorList>
    </citation>
    <scope>NUCLEOTIDE SEQUENCE [LARGE SCALE GENOMIC DNA]</scope>
    <source>
        <strain>OS185</strain>
    </source>
</reference>
<organism>
    <name type="scientific">Shewanella baltica (strain OS185)</name>
    <dbReference type="NCBI Taxonomy" id="402882"/>
    <lineage>
        <taxon>Bacteria</taxon>
        <taxon>Pseudomonadati</taxon>
        <taxon>Pseudomonadota</taxon>
        <taxon>Gammaproteobacteria</taxon>
        <taxon>Alteromonadales</taxon>
        <taxon>Shewanellaceae</taxon>
        <taxon>Shewanella</taxon>
    </lineage>
</organism>
<dbReference type="EMBL" id="CP000753">
    <property type="protein sequence ID" value="ABS07815.1"/>
    <property type="molecule type" value="Genomic_DNA"/>
</dbReference>
<dbReference type="RefSeq" id="WP_012088851.1">
    <property type="nucleotide sequence ID" value="NC_009665.1"/>
</dbReference>
<dbReference type="SMR" id="A6WLX6"/>
<dbReference type="KEGG" id="sbm:Shew185_1670"/>
<dbReference type="HOGENOM" id="CLU_155659_3_1_6"/>
<dbReference type="GO" id="GO:0005829">
    <property type="term" value="C:cytosol"/>
    <property type="evidence" value="ECO:0007669"/>
    <property type="project" value="TreeGrafter"/>
</dbReference>
<dbReference type="FunFam" id="2.20.25.10:FF:000002">
    <property type="entry name" value="UPF0434 protein YcaR"/>
    <property type="match status" value="1"/>
</dbReference>
<dbReference type="Gene3D" id="2.20.25.10">
    <property type="match status" value="1"/>
</dbReference>
<dbReference type="HAMAP" id="MF_01187">
    <property type="entry name" value="UPF0434"/>
    <property type="match status" value="1"/>
</dbReference>
<dbReference type="InterPro" id="IPR005651">
    <property type="entry name" value="Trm112-like"/>
</dbReference>
<dbReference type="PANTHER" id="PTHR33505:SF4">
    <property type="entry name" value="PROTEIN PREY, MITOCHONDRIAL"/>
    <property type="match status" value="1"/>
</dbReference>
<dbReference type="PANTHER" id="PTHR33505">
    <property type="entry name" value="ZGC:162634"/>
    <property type="match status" value="1"/>
</dbReference>
<dbReference type="Pfam" id="PF03966">
    <property type="entry name" value="Trm112p"/>
    <property type="match status" value="1"/>
</dbReference>
<dbReference type="SUPFAM" id="SSF158997">
    <property type="entry name" value="Trm112p-like"/>
    <property type="match status" value="1"/>
</dbReference>
<protein>
    <recommendedName>
        <fullName evidence="1">UPF0434 protein Shew185_1670</fullName>
    </recommendedName>
</protein>
<name>Y1670_SHEB8</name>
<gene>
    <name type="ordered locus">Shew185_1670</name>
</gene>
<evidence type="ECO:0000255" key="1">
    <source>
        <dbReference type="HAMAP-Rule" id="MF_01187"/>
    </source>
</evidence>
<sequence>MAFDKKLLDIVACPVCKGKLEYDKMTQQLICKADKLAYPITEGIPVLLENRAVPLTESV</sequence>
<comment type="similarity">
    <text evidence="1">Belongs to the UPF0434 family.</text>
</comment>
<proteinExistence type="inferred from homology"/>
<accession>A6WLX6</accession>
<feature type="chain" id="PRO_1000065855" description="UPF0434 protein Shew185_1670">
    <location>
        <begin position="1"/>
        <end position="59"/>
    </location>
</feature>